<dbReference type="EMBL" id="AM946015">
    <property type="protein sequence ID" value="CAR41756.1"/>
    <property type="molecule type" value="Genomic_DNA"/>
</dbReference>
<dbReference type="SMR" id="B9DU74"/>
<dbReference type="STRING" id="218495.SUB0774"/>
<dbReference type="KEGG" id="sub:SUB0774"/>
<dbReference type="eggNOG" id="COG0218">
    <property type="taxonomic scope" value="Bacteria"/>
</dbReference>
<dbReference type="HOGENOM" id="CLU_033732_3_0_9"/>
<dbReference type="OrthoDB" id="9804921at2"/>
<dbReference type="Proteomes" id="UP000000449">
    <property type="component" value="Chromosome"/>
</dbReference>
<dbReference type="GO" id="GO:0005829">
    <property type="term" value="C:cytosol"/>
    <property type="evidence" value="ECO:0007669"/>
    <property type="project" value="TreeGrafter"/>
</dbReference>
<dbReference type="GO" id="GO:0005525">
    <property type="term" value="F:GTP binding"/>
    <property type="evidence" value="ECO:0007669"/>
    <property type="project" value="UniProtKB-UniRule"/>
</dbReference>
<dbReference type="GO" id="GO:0046872">
    <property type="term" value="F:metal ion binding"/>
    <property type="evidence" value="ECO:0007669"/>
    <property type="project" value="UniProtKB-KW"/>
</dbReference>
<dbReference type="GO" id="GO:0000917">
    <property type="term" value="P:division septum assembly"/>
    <property type="evidence" value="ECO:0007669"/>
    <property type="project" value="UniProtKB-KW"/>
</dbReference>
<dbReference type="CDD" id="cd01876">
    <property type="entry name" value="YihA_EngB"/>
    <property type="match status" value="1"/>
</dbReference>
<dbReference type="FunFam" id="3.40.50.300:FF:000098">
    <property type="entry name" value="Probable GTP-binding protein EngB"/>
    <property type="match status" value="1"/>
</dbReference>
<dbReference type="Gene3D" id="3.40.50.300">
    <property type="entry name" value="P-loop containing nucleotide triphosphate hydrolases"/>
    <property type="match status" value="1"/>
</dbReference>
<dbReference type="HAMAP" id="MF_00321">
    <property type="entry name" value="GTPase_EngB"/>
    <property type="match status" value="1"/>
</dbReference>
<dbReference type="InterPro" id="IPR030393">
    <property type="entry name" value="G_ENGB_dom"/>
</dbReference>
<dbReference type="InterPro" id="IPR006073">
    <property type="entry name" value="GTP-bd"/>
</dbReference>
<dbReference type="InterPro" id="IPR019987">
    <property type="entry name" value="GTP-bd_ribosome_bio_YsxC"/>
</dbReference>
<dbReference type="InterPro" id="IPR027417">
    <property type="entry name" value="P-loop_NTPase"/>
</dbReference>
<dbReference type="InterPro" id="IPR005225">
    <property type="entry name" value="Small_GTP-bd"/>
</dbReference>
<dbReference type="NCBIfam" id="TIGR03598">
    <property type="entry name" value="GTPase_YsxC"/>
    <property type="match status" value="1"/>
</dbReference>
<dbReference type="NCBIfam" id="TIGR00231">
    <property type="entry name" value="small_GTP"/>
    <property type="match status" value="1"/>
</dbReference>
<dbReference type="PANTHER" id="PTHR11649:SF13">
    <property type="entry name" value="ENGB-TYPE G DOMAIN-CONTAINING PROTEIN"/>
    <property type="match status" value="1"/>
</dbReference>
<dbReference type="PANTHER" id="PTHR11649">
    <property type="entry name" value="MSS1/TRME-RELATED GTP-BINDING PROTEIN"/>
    <property type="match status" value="1"/>
</dbReference>
<dbReference type="Pfam" id="PF01926">
    <property type="entry name" value="MMR_HSR1"/>
    <property type="match status" value="1"/>
</dbReference>
<dbReference type="PRINTS" id="PR00449">
    <property type="entry name" value="RASTRNSFRMNG"/>
</dbReference>
<dbReference type="SUPFAM" id="SSF52540">
    <property type="entry name" value="P-loop containing nucleoside triphosphate hydrolases"/>
    <property type="match status" value="1"/>
</dbReference>
<dbReference type="PROSITE" id="PS51706">
    <property type="entry name" value="G_ENGB"/>
    <property type="match status" value="1"/>
</dbReference>
<accession>B9DU74</accession>
<evidence type="ECO:0000255" key="1">
    <source>
        <dbReference type="HAMAP-Rule" id="MF_00321"/>
    </source>
</evidence>
<organism>
    <name type="scientific">Streptococcus uberis (strain ATCC BAA-854 / 0140J)</name>
    <dbReference type="NCBI Taxonomy" id="218495"/>
    <lineage>
        <taxon>Bacteria</taxon>
        <taxon>Bacillati</taxon>
        <taxon>Bacillota</taxon>
        <taxon>Bacilli</taxon>
        <taxon>Lactobacillales</taxon>
        <taxon>Streptococcaceae</taxon>
        <taxon>Streptococcus</taxon>
    </lineage>
</organism>
<name>ENGB_STRU0</name>
<gene>
    <name evidence="1" type="primary">engB</name>
    <name type="ordered locus">SUB0774</name>
</gene>
<protein>
    <recommendedName>
        <fullName evidence="1">Probable GTP-binding protein EngB</fullName>
    </recommendedName>
</protein>
<proteinExistence type="inferred from homology"/>
<keyword id="KW-0131">Cell cycle</keyword>
<keyword id="KW-0132">Cell division</keyword>
<keyword id="KW-0342">GTP-binding</keyword>
<keyword id="KW-0460">Magnesium</keyword>
<keyword id="KW-0479">Metal-binding</keyword>
<keyword id="KW-0547">Nucleotide-binding</keyword>
<keyword id="KW-1185">Reference proteome</keyword>
<keyword id="KW-0717">Septation</keyword>
<feature type="chain" id="PRO_1000189941" description="Probable GTP-binding protein EngB">
    <location>
        <begin position="1"/>
        <end position="199"/>
    </location>
</feature>
<feature type="domain" description="EngB-type G" evidence="1">
    <location>
        <begin position="28"/>
        <end position="199"/>
    </location>
</feature>
<feature type="binding site" evidence="1">
    <location>
        <begin position="36"/>
        <end position="43"/>
    </location>
    <ligand>
        <name>GTP</name>
        <dbReference type="ChEBI" id="CHEBI:37565"/>
    </ligand>
</feature>
<feature type="binding site" evidence="1">
    <location>
        <position position="43"/>
    </location>
    <ligand>
        <name>Mg(2+)</name>
        <dbReference type="ChEBI" id="CHEBI:18420"/>
    </ligand>
</feature>
<feature type="binding site" evidence="1">
    <location>
        <begin position="63"/>
        <end position="67"/>
    </location>
    <ligand>
        <name>GTP</name>
        <dbReference type="ChEBI" id="CHEBI:37565"/>
    </ligand>
</feature>
<feature type="binding site" evidence="1">
    <location>
        <position position="65"/>
    </location>
    <ligand>
        <name>Mg(2+)</name>
        <dbReference type="ChEBI" id="CHEBI:18420"/>
    </ligand>
</feature>
<feature type="binding site" evidence="1">
    <location>
        <begin position="81"/>
        <end position="84"/>
    </location>
    <ligand>
        <name>GTP</name>
        <dbReference type="ChEBI" id="CHEBI:37565"/>
    </ligand>
</feature>
<feature type="binding site" evidence="1">
    <location>
        <begin position="148"/>
        <end position="151"/>
    </location>
    <ligand>
        <name>GTP</name>
        <dbReference type="ChEBI" id="CHEBI:37565"/>
    </ligand>
</feature>
<feature type="binding site" evidence="1">
    <location>
        <begin position="180"/>
        <end position="182"/>
    </location>
    <ligand>
        <name>GTP</name>
        <dbReference type="ChEBI" id="CHEBI:37565"/>
    </ligand>
</feature>
<sequence>MAEEQVLNTHNASLLLSAANKSHYPEDDIPEIALAGRSNVGKSSFINTLLGRKNLARTSGKPGKTQLLNFFNIDDKIRFVDVPGYGYAKVSKVERARWGKMIEEYLTSRDNLRAVVSLVDLRHEPSTEDVQMYEFLKYYEIPVIVVATKADKIPRGKWNKHESMIKKKLNFEQEDAFILFSSVDRIGIDQAWDAILEQI</sequence>
<comment type="function">
    <text evidence="1">Necessary for normal cell division and for the maintenance of normal septation.</text>
</comment>
<comment type="cofactor">
    <cofactor evidence="1">
        <name>Mg(2+)</name>
        <dbReference type="ChEBI" id="CHEBI:18420"/>
    </cofactor>
</comment>
<comment type="similarity">
    <text evidence="1">Belongs to the TRAFAC class TrmE-Era-EngA-EngB-Septin-like GTPase superfamily. EngB GTPase family.</text>
</comment>
<reference key="1">
    <citation type="journal article" date="2009" name="BMC Genomics">
        <title>Evidence for niche adaptation in the genome of the bovine pathogen Streptococcus uberis.</title>
        <authorList>
            <person name="Ward P.N."/>
            <person name="Holden M.T.G."/>
            <person name="Leigh J.A."/>
            <person name="Lennard N."/>
            <person name="Bignell A."/>
            <person name="Barron A."/>
            <person name="Clark L."/>
            <person name="Quail M.A."/>
            <person name="Woodward J."/>
            <person name="Barrell B.G."/>
            <person name="Egan S.A."/>
            <person name="Field T.R."/>
            <person name="Maskell D."/>
            <person name="Kehoe M."/>
            <person name="Dowson C.G."/>
            <person name="Chanter N."/>
            <person name="Whatmore A.M."/>
            <person name="Bentley S.D."/>
            <person name="Parkhill J."/>
        </authorList>
    </citation>
    <scope>NUCLEOTIDE SEQUENCE [LARGE SCALE GENOMIC DNA]</scope>
    <source>
        <strain>ATCC BAA-854 / 0140J</strain>
    </source>
</reference>